<geneLocation type="plasmid">
    <name>sym pNGR234a</name>
</geneLocation>
<sequence>MLSTRKQNWGEDRVMFYDAQGRLRSLPASWTDVNEADLFSQVAAGRSFSRPDDLSALASLIDRIKRRQEE</sequence>
<protein>
    <recommendedName>
        <fullName>Uncharacterized protein y4oN</fullName>
    </recommendedName>
</protein>
<name>Y4ON_SINFN</name>
<organism>
    <name type="scientific">Sinorhizobium fredii (strain NBRC 101917 / NGR234)</name>
    <dbReference type="NCBI Taxonomy" id="394"/>
    <lineage>
        <taxon>Bacteria</taxon>
        <taxon>Pseudomonadati</taxon>
        <taxon>Pseudomonadota</taxon>
        <taxon>Alphaproteobacteria</taxon>
        <taxon>Hyphomicrobiales</taxon>
        <taxon>Rhizobiaceae</taxon>
        <taxon>Sinorhizobium/Ensifer group</taxon>
        <taxon>Sinorhizobium</taxon>
    </lineage>
</organism>
<accession>P55599</accession>
<keyword id="KW-0614">Plasmid</keyword>
<keyword id="KW-1185">Reference proteome</keyword>
<feature type="chain" id="PRO_0000200929" description="Uncharacterized protein y4oN">
    <location>
        <begin position="1"/>
        <end position="70"/>
    </location>
</feature>
<gene>
    <name type="ordered locus">NGR_a02210</name>
    <name type="ORF">y4oN</name>
</gene>
<reference key="1">
    <citation type="journal article" date="1997" name="Nature">
        <title>Molecular basis of symbiosis between Rhizobium and legumes.</title>
        <authorList>
            <person name="Freiberg C.A."/>
            <person name="Fellay R."/>
            <person name="Bairoch A."/>
            <person name="Broughton W.J."/>
            <person name="Rosenthal A."/>
            <person name="Perret X."/>
        </authorList>
    </citation>
    <scope>NUCLEOTIDE SEQUENCE [LARGE SCALE GENOMIC DNA]</scope>
    <source>
        <strain>NBRC 101917 / NGR234</strain>
    </source>
</reference>
<reference key="2">
    <citation type="journal article" date="2009" name="Appl. Environ. Microbiol.">
        <title>Rhizobium sp. strain NGR234 possesses a remarkable number of secretion systems.</title>
        <authorList>
            <person name="Schmeisser C."/>
            <person name="Liesegang H."/>
            <person name="Krysciak D."/>
            <person name="Bakkou N."/>
            <person name="Le Quere A."/>
            <person name="Wollherr A."/>
            <person name="Heinemeyer I."/>
            <person name="Morgenstern B."/>
            <person name="Pommerening-Roeser A."/>
            <person name="Flores M."/>
            <person name="Palacios R."/>
            <person name="Brenner S."/>
            <person name="Gottschalk G."/>
            <person name="Schmitz R.A."/>
            <person name="Broughton W.J."/>
            <person name="Perret X."/>
            <person name="Strittmatter A.W."/>
            <person name="Streit W.R."/>
        </authorList>
    </citation>
    <scope>NUCLEOTIDE SEQUENCE [LARGE SCALE GENOMIC DNA]</scope>
    <source>
        <strain>NBRC 101917 / NGR234</strain>
    </source>
</reference>
<dbReference type="EMBL" id="U00090">
    <property type="protein sequence ID" value="AAB91801.1"/>
    <property type="molecule type" value="Genomic_DNA"/>
</dbReference>
<dbReference type="RefSeq" id="NP_444004.1">
    <property type="nucleotide sequence ID" value="NC_000914.2"/>
</dbReference>
<dbReference type="KEGG" id="rhi:NGR_a02210"/>
<dbReference type="eggNOG" id="ENOG5033B2C">
    <property type="taxonomic scope" value="Bacteria"/>
</dbReference>
<dbReference type="HOGENOM" id="CLU_153247_1_0_5"/>
<dbReference type="OrthoDB" id="8376804at2"/>
<dbReference type="Proteomes" id="UP000001054">
    <property type="component" value="Plasmid pNGR234a"/>
</dbReference>
<dbReference type="InterPro" id="IPR035315">
    <property type="entry name" value="DUF5372"/>
</dbReference>
<dbReference type="Pfam" id="PF17342">
    <property type="entry name" value="DUF5372"/>
    <property type="match status" value="1"/>
</dbReference>
<proteinExistence type="predicted"/>